<comment type="function">
    <text evidence="1">Controls reversibly actin polymerization and depolymerization in a pH-sensitive manner. It has the ability to bind G- and F-actin in a 1:1 ratio of cofilin to actin. Binding to F-actin is regulated by tropomyosin. It is the major component of intranuclear and cytoplasmic actin rods. Required for accumulation of actin at the cell division site via depolymerizing actin at the cell ends. In association with myosin II has a role in the assembly of the contractile ring via severing actin filaments. Involved in the maintenance of the contractile ring once formed. In association with profilin and capping protein, has a role in the mitotic reorganization of the actin cytoskeleton (By similarity).</text>
</comment>
<comment type="subcellular location">
    <subcellularLocation>
        <location evidence="1">Cytoplasm</location>
    </subcellularLocation>
    <subcellularLocation>
        <location evidence="1">Cytoplasm</location>
        <location evidence="1">Cytoskeleton</location>
    </subcellularLocation>
    <subcellularLocation>
        <location evidence="1">Nucleus matrix</location>
    </subcellularLocation>
    <text evidence="1">Throughout the cytoplasm (but not on the cytoplasmic cables) and major component of the cortical actin cytoskeleton.</text>
</comment>
<comment type="similarity">
    <text evidence="3">Belongs to the actin-binding proteins ADF family.</text>
</comment>
<comment type="sequence caution" evidence="3">
    <conflict type="erroneous gene model prediction">
        <sequence resource="EMBL-CDS" id="CEF88173"/>
    </conflict>
</comment>
<evidence type="ECO:0000250" key="1"/>
<evidence type="ECO:0000255" key="2">
    <source>
        <dbReference type="PROSITE-ProRule" id="PRU00599"/>
    </source>
</evidence>
<evidence type="ECO:0000305" key="3"/>
<proteinExistence type="inferred from homology"/>
<organism>
    <name type="scientific">Gibberella zeae (strain ATCC MYA-4620 / CBS 123657 / FGSC 9075 / NRRL 31084 / PH-1)</name>
    <name type="common">Wheat head blight fungus</name>
    <name type="synonym">Fusarium graminearum</name>
    <dbReference type="NCBI Taxonomy" id="229533"/>
    <lineage>
        <taxon>Eukaryota</taxon>
        <taxon>Fungi</taxon>
        <taxon>Dikarya</taxon>
        <taxon>Ascomycota</taxon>
        <taxon>Pezizomycotina</taxon>
        <taxon>Sordariomycetes</taxon>
        <taxon>Hypocreomycetidae</taxon>
        <taxon>Hypocreales</taxon>
        <taxon>Nectriaceae</taxon>
        <taxon>Fusarium</taxon>
    </lineage>
</organism>
<reference key="1">
    <citation type="journal article" date="2007" name="Science">
        <title>The Fusarium graminearum genome reveals a link between localized polymorphism and pathogen specialization.</title>
        <authorList>
            <person name="Cuomo C.A."/>
            <person name="Gueldener U."/>
            <person name="Xu J.-R."/>
            <person name="Trail F."/>
            <person name="Turgeon B.G."/>
            <person name="Di Pietro A."/>
            <person name="Walton J.D."/>
            <person name="Ma L.-J."/>
            <person name="Baker S.E."/>
            <person name="Rep M."/>
            <person name="Adam G."/>
            <person name="Antoniw J."/>
            <person name="Baldwin T."/>
            <person name="Calvo S.E."/>
            <person name="Chang Y.-L."/>
            <person name="DeCaprio D."/>
            <person name="Gale L.R."/>
            <person name="Gnerre S."/>
            <person name="Goswami R.S."/>
            <person name="Hammond-Kosack K."/>
            <person name="Harris L.J."/>
            <person name="Hilburn K."/>
            <person name="Kennell J.C."/>
            <person name="Kroken S."/>
            <person name="Magnuson J.K."/>
            <person name="Mannhaupt G."/>
            <person name="Mauceli E.W."/>
            <person name="Mewes H.-W."/>
            <person name="Mitterbauer R."/>
            <person name="Muehlbauer G."/>
            <person name="Muensterkoetter M."/>
            <person name="Nelson D."/>
            <person name="O'Donnell K."/>
            <person name="Ouellet T."/>
            <person name="Qi W."/>
            <person name="Quesneville H."/>
            <person name="Roncero M.I.G."/>
            <person name="Seong K.-Y."/>
            <person name="Tetko I.V."/>
            <person name="Urban M."/>
            <person name="Waalwijk C."/>
            <person name="Ward T.J."/>
            <person name="Yao J."/>
            <person name="Birren B.W."/>
            <person name="Kistler H.C."/>
        </authorList>
    </citation>
    <scope>NUCLEOTIDE SEQUENCE [LARGE SCALE GENOMIC DNA]</scope>
    <source>
        <strain>ATCC MYA-4620 / CBS 123657 / FGSC 9075 / NRRL 31084 / PH-1</strain>
    </source>
</reference>
<reference key="2">
    <citation type="journal article" date="2010" name="Nature">
        <title>Comparative genomics reveals mobile pathogenicity chromosomes in Fusarium.</title>
        <authorList>
            <person name="Ma L.-J."/>
            <person name="van der Does H.C."/>
            <person name="Borkovich K.A."/>
            <person name="Coleman J.J."/>
            <person name="Daboussi M.-J."/>
            <person name="Di Pietro A."/>
            <person name="Dufresne M."/>
            <person name="Freitag M."/>
            <person name="Grabherr M."/>
            <person name="Henrissat B."/>
            <person name="Houterman P.M."/>
            <person name="Kang S."/>
            <person name="Shim W.-B."/>
            <person name="Woloshuk C."/>
            <person name="Xie X."/>
            <person name="Xu J.-R."/>
            <person name="Antoniw J."/>
            <person name="Baker S.E."/>
            <person name="Bluhm B.H."/>
            <person name="Breakspear A."/>
            <person name="Brown D.W."/>
            <person name="Butchko R.A.E."/>
            <person name="Chapman S."/>
            <person name="Coulson R."/>
            <person name="Coutinho P.M."/>
            <person name="Danchin E.G.J."/>
            <person name="Diener A."/>
            <person name="Gale L.R."/>
            <person name="Gardiner D.M."/>
            <person name="Goff S."/>
            <person name="Hammond-Kosack K.E."/>
            <person name="Hilburn K."/>
            <person name="Hua-Van A."/>
            <person name="Jonkers W."/>
            <person name="Kazan K."/>
            <person name="Kodira C.D."/>
            <person name="Koehrsen M."/>
            <person name="Kumar L."/>
            <person name="Lee Y.-H."/>
            <person name="Li L."/>
            <person name="Manners J.M."/>
            <person name="Miranda-Saavedra D."/>
            <person name="Mukherjee M."/>
            <person name="Park G."/>
            <person name="Park J."/>
            <person name="Park S.-Y."/>
            <person name="Proctor R.H."/>
            <person name="Regev A."/>
            <person name="Ruiz-Roldan M.C."/>
            <person name="Sain D."/>
            <person name="Sakthikumar S."/>
            <person name="Sykes S."/>
            <person name="Schwartz D.C."/>
            <person name="Turgeon B.G."/>
            <person name="Wapinski I."/>
            <person name="Yoder O."/>
            <person name="Young S."/>
            <person name="Zeng Q."/>
            <person name="Zhou S."/>
            <person name="Galagan J."/>
            <person name="Cuomo C.A."/>
            <person name="Kistler H.C."/>
            <person name="Rep M."/>
        </authorList>
    </citation>
    <scope>GENOME REANNOTATION</scope>
    <source>
        <strain>ATCC MYA-4620 / CBS 123657 / FGSC 9075 / NRRL 31084 / PH-1</strain>
    </source>
</reference>
<reference key="3">
    <citation type="journal article" date="2015" name="BMC Genomics">
        <title>The completed genome sequence of the pathogenic ascomycete fungus Fusarium graminearum.</title>
        <authorList>
            <person name="King R."/>
            <person name="Urban M."/>
            <person name="Hammond-Kosack M.C.U."/>
            <person name="Hassani-Pak K."/>
            <person name="Hammond-Kosack K.E."/>
        </authorList>
    </citation>
    <scope>NUCLEOTIDE SEQUENCE [LARGE SCALE GENOMIC DNA]</scope>
    <source>
        <strain>ATCC MYA-4620 / CBS 123657 / FGSC 9075 / NRRL 31084 / PH-1</strain>
    </source>
</reference>
<protein>
    <recommendedName>
        <fullName>Cofilin</fullName>
    </recommendedName>
    <alternativeName>
        <fullName>Actin-depolymerizing factor 1</fullName>
    </alternativeName>
</protein>
<feature type="chain" id="PRO_0000255625" description="Cofilin">
    <location>
        <begin position="1"/>
        <end position="153"/>
    </location>
</feature>
<feature type="domain" description="ADF-H" evidence="2">
    <location>
        <begin position="4"/>
        <end position="148"/>
    </location>
</feature>
<accession>Q4I963</accession>
<accession>A0A098E4Q7</accession>
<accession>A0A0E0SP10</accession>
<accession>A0A1I9FVL7</accession>
<accession>I1RQA4</accession>
<accession>V6REA7</accession>
<dbReference type="EMBL" id="DS231665">
    <property type="protein sequence ID" value="ESU12317.1"/>
    <property type="molecule type" value="Genomic_DNA"/>
</dbReference>
<dbReference type="EMBL" id="HG970334">
    <property type="protein sequence ID" value="CEF88173.1"/>
    <property type="status" value="ALT_SEQ"/>
    <property type="molecule type" value="Genomic_DNA"/>
</dbReference>
<dbReference type="RefSeq" id="XP_011324893.1">
    <property type="nucleotide sequence ID" value="XM_011326591.1"/>
</dbReference>
<dbReference type="SMR" id="Q4I963"/>
<dbReference type="FunCoup" id="Q4I963">
    <property type="interactions" value="811"/>
</dbReference>
<dbReference type="STRING" id="229533.Q4I963"/>
<dbReference type="GeneID" id="23553381"/>
<dbReference type="KEGG" id="fgr:FGSG_06245"/>
<dbReference type="eggNOG" id="KOG1735">
    <property type="taxonomic scope" value="Eukaryota"/>
</dbReference>
<dbReference type="HOGENOM" id="CLU_094004_4_0_1"/>
<dbReference type="InParanoid" id="Q4I963"/>
<dbReference type="OrthoDB" id="107677at110618"/>
<dbReference type="Proteomes" id="UP000070720">
    <property type="component" value="Chromosome 3"/>
</dbReference>
<dbReference type="GO" id="GO:0015629">
    <property type="term" value="C:actin cytoskeleton"/>
    <property type="evidence" value="ECO:0007669"/>
    <property type="project" value="InterPro"/>
</dbReference>
<dbReference type="GO" id="GO:0005737">
    <property type="term" value="C:cytoplasm"/>
    <property type="evidence" value="ECO:0007669"/>
    <property type="project" value="UniProtKB-SubCell"/>
</dbReference>
<dbReference type="GO" id="GO:0016363">
    <property type="term" value="C:nuclear matrix"/>
    <property type="evidence" value="ECO:0007669"/>
    <property type="project" value="UniProtKB-SubCell"/>
</dbReference>
<dbReference type="GO" id="GO:0003779">
    <property type="term" value="F:actin binding"/>
    <property type="evidence" value="ECO:0007669"/>
    <property type="project" value="UniProtKB-KW"/>
</dbReference>
<dbReference type="GO" id="GO:0030042">
    <property type="term" value="P:actin filament depolymerization"/>
    <property type="evidence" value="ECO:0007669"/>
    <property type="project" value="InterPro"/>
</dbReference>
<dbReference type="GO" id="GO:0051301">
    <property type="term" value="P:cell division"/>
    <property type="evidence" value="ECO:0007669"/>
    <property type="project" value="UniProtKB-KW"/>
</dbReference>
<dbReference type="CDD" id="cd11286">
    <property type="entry name" value="ADF_cofilin_like"/>
    <property type="match status" value="1"/>
</dbReference>
<dbReference type="Gene3D" id="3.40.20.10">
    <property type="entry name" value="Severin"/>
    <property type="match status" value="1"/>
</dbReference>
<dbReference type="InterPro" id="IPR002108">
    <property type="entry name" value="ADF-H"/>
</dbReference>
<dbReference type="InterPro" id="IPR029006">
    <property type="entry name" value="ADF-H/Gelsolin-like_dom_sf"/>
</dbReference>
<dbReference type="InterPro" id="IPR017904">
    <property type="entry name" value="ADF/Cofilin"/>
</dbReference>
<dbReference type="PANTHER" id="PTHR11913">
    <property type="entry name" value="COFILIN-RELATED"/>
    <property type="match status" value="1"/>
</dbReference>
<dbReference type="Pfam" id="PF00241">
    <property type="entry name" value="Cofilin_ADF"/>
    <property type="match status" value="1"/>
</dbReference>
<dbReference type="PRINTS" id="PR00006">
    <property type="entry name" value="COFILIN"/>
</dbReference>
<dbReference type="SMART" id="SM00102">
    <property type="entry name" value="ADF"/>
    <property type="match status" value="1"/>
</dbReference>
<dbReference type="SUPFAM" id="SSF55753">
    <property type="entry name" value="Actin depolymerizing proteins"/>
    <property type="match status" value="1"/>
</dbReference>
<dbReference type="PROSITE" id="PS51263">
    <property type="entry name" value="ADF_H"/>
    <property type="match status" value="1"/>
</dbReference>
<sequence length="153" mass="16969">MSQSGATVSQDCITAFNDLKLNKKYKFIVYKLSDDYKEIVIDKASESRDWEDFRETLVNATAKSRTGAVGKGPRYAVYDFEYNLASGDGIRNKITFIAWSPDDAGIQPKMIYASSKEALKRSLTGIATELQANDTDDIEYDSILKTVSKGLAA</sequence>
<gene>
    <name type="primary">COF1</name>
    <name type="ORF">FGRAMPH1_01T19853</name>
    <name type="ORF">FGRRES_06245</name>
    <name type="ORF">FGSG_06245</name>
</gene>
<name>COFI_GIBZE</name>
<keyword id="KW-0009">Actin-binding</keyword>
<keyword id="KW-0131">Cell cycle</keyword>
<keyword id="KW-0132">Cell division</keyword>
<keyword id="KW-0963">Cytoplasm</keyword>
<keyword id="KW-0206">Cytoskeleton</keyword>
<keyword id="KW-0539">Nucleus</keyword>
<keyword id="KW-1185">Reference proteome</keyword>